<reference key="1">
    <citation type="submission" date="2007-05" db="EMBL/GenBank/DDBJ databases">
        <title>Complete sequence of Geobacter uraniireducens Rf4.</title>
        <authorList>
            <consortium name="US DOE Joint Genome Institute"/>
            <person name="Copeland A."/>
            <person name="Lucas S."/>
            <person name="Lapidus A."/>
            <person name="Barry K."/>
            <person name="Detter J.C."/>
            <person name="Glavina del Rio T."/>
            <person name="Hammon N."/>
            <person name="Israni S."/>
            <person name="Dalin E."/>
            <person name="Tice H."/>
            <person name="Pitluck S."/>
            <person name="Chertkov O."/>
            <person name="Brettin T."/>
            <person name="Bruce D."/>
            <person name="Han C."/>
            <person name="Schmutz J."/>
            <person name="Larimer F."/>
            <person name="Land M."/>
            <person name="Hauser L."/>
            <person name="Kyrpides N."/>
            <person name="Mikhailova N."/>
            <person name="Shelobolina E."/>
            <person name="Aklujkar M."/>
            <person name="Lovley D."/>
            <person name="Richardson P."/>
        </authorList>
    </citation>
    <scope>NUCLEOTIDE SEQUENCE [LARGE SCALE GENOMIC DNA]</scope>
    <source>
        <strain>ATCC BAA-1134 / JCM 13001 / Rf4</strain>
    </source>
</reference>
<protein>
    <recommendedName>
        <fullName evidence="1">Adenine deaminase</fullName>
        <shortName evidence="1">ADE</shortName>
        <ecNumber evidence="1">3.5.4.2</ecNumber>
    </recommendedName>
    <alternativeName>
        <fullName evidence="1">Adenine aminohydrolase</fullName>
        <shortName evidence="1">AAH</shortName>
    </alternativeName>
</protein>
<comment type="function">
    <text evidence="1">Catalyzes the hydrolytic deamination of adenine to hypoxanthine. Plays an important role in the purine salvage pathway and in nitrogen catabolism.</text>
</comment>
<comment type="catalytic activity">
    <reaction evidence="1">
        <text>adenine + H2O + H(+) = hypoxanthine + NH4(+)</text>
        <dbReference type="Rhea" id="RHEA:23688"/>
        <dbReference type="ChEBI" id="CHEBI:15377"/>
        <dbReference type="ChEBI" id="CHEBI:15378"/>
        <dbReference type="ChEBI" id="CHEBI:16708"/>
        <dbReference type="ChEBI" id="CHEBI:17368"/>
        <dbReference type="ChEBI" id="CHEBI:28938"/>
        <dbReference type="EC" id="3.5.4.2"/>
    </reaction>
</comment>
<comment type="cofactor">
    <cofactor evidence="1">
        <name>Zn(2+)</name>
        <dbReference type="ChEBI" id="CHEBI:29105"/>
    </cofactor>
    <text evidence="1">Binds 1 zinc ion per subunit.</text>
</comment>
<comment type="similarity">
    <text evidence="1">Belongs to the metallo-dependent hydrolases superfamily. Adenosine and AMP deaminases family. Adenine deaminase type 2 subfamily.</text>
</comment>
<organism>
    <name type="scientific">Geotalea uraniireducens (strain Rf4)</name>
    <name type="common">Geobacter uraniireducens</name>
    <dbReference type="NCBI Taxonomy" id="351605"/>
    <lineage>
        <taxon>Bacteria</taxon>
        <taxon>Pseudomonadati</taxon>
        <taxon>Thermodesulfobacteriota</taxon>
        <taxon>Desulfuromonadia</taxon>
        <taxon>Geobacterales</taxon>
        <taxon>Geobacteraceae</taxon>
        <taxon>Geotalea</taxon>
    </lineage>
</organism>
<name>ADE_GEOUR</name>
<evidence type="ECO:0000255" key="1">
    <source>
        <dbReference type="HAMAP-Rule" id="MF_01962"/>
    </source>
</evidence>
<keyword id="KW-0378">Hydrolase</keyword>
<keyword id="KW-0479">Metal-binding</keyword>
<keyword id="KW-0546">Nucleotide metabolism</keyword>
<keyword id="KW-1185">Reference proteome</keyword>
<keyword id="KW-0862">Zinc</keyword>
<sequence length="355" mass="39950">MNFDCIPREDLHGILCHMPKAELHIHIEGSLEPELIFELATRNRIQLPYPTIDELRAAYAFTDLQSFLDIYYAGASVLQKEADFFDMAWAYLKRAKAENVVHAEIFFDPQTHTARGIPFETVINGLDRAIRRGREELGLSASLILCFLRHLSEEDAFAALEDALPFRDKFIGVGLDSSERGNPPEKFTRVFARCRELGLRLVAHAGEEGSAEYISHSLDLLKAERIDHGVHCLDDPKLVARLVQQRIPLTVCPLSNVKLCVFPSLSAHNIGKLLAAGIAATINSDDPAYFGGYLNRNYTATFAALPGLGAKEAYQLARNSFEASFVNENIKEGWIRELDEFFTHYRENEGKWLPL</sequence>
<proteinExistence type="inferred from homology"/>
<gene>
    <name type="ordered locus">Gura_2399</name>
</gene>
<accession>A5G460</accession>
<feature type="chain" id="PRO_1000081924" description="Adenine deaminase">
    <location>
        <begin position="1"/>
        <end position="355"/>
    </location>
</feature>
<feature type="active site" description="Proton donor" evidence="1">
    <location>
        <position position="207"/>
    </location>
</feature>
<feature type="binding site" evidence="1">
    <location>
        <position position="24"/>
    </location>
    <ligand>
        <name>Zn(2+)</name>
        <dbReference type="ChEBI" id="CHEBI:29105"/>
        <note>catalytic</note>
    </ligand>
</feature>
<feature type="binding site" evidence="1">
    <location>
        <position position="26"/>
    </location>
    <ligand>
        <name>Zn(2+)</name>
        <dbReference type="ChEBI" id="CHEBI:29105"/>
        <note>catalytic</note>
    </ligand>
</feature>
<feature type="binding site" evidence="1">
    <location>
        <position position="204"/>
    </location>
    <ligand>
        <name>Zn(2+)</name>
        <dbReference type="ChEBI" id="CHEBI:29105"/>
        <note>catalytic</note>
    </ligand>
</feature>
<feature type="binding site" evidence="1">
    <location>
        <position position="285"/>
    </location>
    <ligand>
        <name>Zn(2+)</name>
        <dbReference type="ChEBI" id="CHEBI:29105"/>
        <note>catalytic</note>
    </ligand>
</feature>
<feature type="binding site" evidence="1">
    <location>
        <position position="286"/>
    </location>
    <ligand>
        <name>substrate</name>
    </ligand>
</feature>
<feature type="site" description="Important for catalytic activity" evidence="1">
    <location>
        <position position="228"/>
    </location>
</feature>
<dbReference type="EC" id="3.5.4.2" evidence="1"/>
<dbReference type="EMBL" id="CP000698">
    <property type="protein sequence ID" value="ABQ26578.1"/>
    <property type="molecule type" value="Genomic_DNA"/>
</dbReference>
<dbReference type="RefSeq" id="WP_011939269.1">
    <property type="nucleotide sequence ID" value="NC_009483.1"/>
</dbReference>
<dbReference type="SMR" id="A5G460"/>
<dbReference type="STRING" id="351605.Gura_2399"/>
<dbReference type="KEGG" id="gur:Gura_2399"/>
<dbReference type="HOGENOM" id="CLU_039228_7_0_7"/>
<dbReference type="OrthoDB" id="105475at2"/>
<dbReference type="Proteomes" id="UP000006695">
    <property type="component" value="Chromosome"/>
</dbReference>
<dbReference type="GO" id="GO:0005829">
    <property type="term" value="C:cytosol"/>
    <property type="evidence" value="ECO:0007669"/>
    <property type="project" value="TreeGrafter"/>
</dbReference>
<dbReference type="GO" id="GO:0000034">
    <property type="term" value="F:adenine deaminase activity"/>
    <property type="evidence" value="ECO:0007669"/>
    <property type="project" value="UniProtKB-UniRule"/>
</dbReference>
<dbReference type="GO" id="GO:0008270">
    <property type="term" value="F:zinc ion binding"/>
    <property type="evidence" value="ECO:0007669"/>
    <property type="project" value="UniProtKB-UniRule"/>
</dbReference>
<dbReference type="GO" id="GO:0006146">
    <property type="term" value="P:adenine catabolic process"/>
    <property type="evidence" value="ECO:0007669"/>
    <property type="project" value="UniProtKB-UniRule"/>
</dbReference>
<dbReference type="GO" id="GO:0043103">
    <property type="term" value="P:hypoxanthine salvage"/>
    <property type="evidence" value="ECO:0007669"/>
    <property type="project" value="UniProtKB-UniRule"/>
</dbReference>
<dbReference type="GO" id="GO:0009117">
    <property type="term" value="P:nucleotide metabolic process"/>
    <property type="evidence" value="ECO:0007669"/>
    <property type="project" value="UniProtKB-KW"/>
</dbReference>
<dbReference type="CDD" id="cd01320">
    <property type="entry name" value="ADA"/>
    <property type="match status" value="1"/>
</dbReference>
<dbReference type="FunFam" id="3.20.20.140:FF:000039">
    <property type="entry name" value="Adenine deaminase"/>
    <property type="match status" value="1"/>
</dbReference>
<dbReference type="Gene3D" id="3.20.20.140">
    <property type="entry name" value="Metal-dependent hydrolases"/>
    <property type="match status" value="1"/>
</dbReference>
<dbReference type="HAMAP" id="MF_01962">
    <property type="entry name" value="Adenine_deaminase"/>
    <property type="match status" value="1"/>
</dbReference>
<dbReference type="InterPro" id="IPR001365">
    <property type="entry name" value="A_deaminase_dom"/>
</dbReference>
<dbReference type="InterPro" id="IPR028892">
    <property type="entry name" value="ADE"/>
</dbReference>
<dbReference type="InterPro" id="IPR006330">
    <property type="entry name" value="Ado/ade_deaminase"/>
</dbReference>
<dbReference type="InterPro" id="IPR032466">
    <property type="entry name" value="Metal_Hydrolase"/>
</dbReference>
<dbReference type="NCBIfam" id="TIGR01430">
    <property type="entry name" value="aden_deam"/>
    <property type="match status" value="1"/>
</dbReference>
<dbReference type="NCBIfam" id="NF006850">
    <property type="entry name" value="PRK09358.1-6"/>
    <property type="match status" value="1"/>
</dbReference>
<dbReference type="PANTHER" id="PTHR43114">
    <property type="entry name" value="ADENINE DEAMINASE"/>
    <property type="match status" value="1"/>
</dbReference>
<dbReference type="PANTHER" id="PTHR43114:SF6">
    <property type="entry name" value="ADENINE DEAMINASE"/>
    <property type="match status" value="1"/>
</dbReference>
<dbReference type="Pfam" id="PF00962">
    <property type="entry name" value="A_deaminase"/>
    <property type="match status" value="1"/>
</dbReference>
<dbReference type="SUPFAM" id="SSF51556">
    <property type="entry name" value="Metallo-dependent hydrolases"/>
    <property type="match status" value="1"/>
</dbReference>